<keyword id="KW-0165">Cleavage on pair of basic residues</keyword>
<keyword id="KW-0527">Neuropeptide</keyword>
<keyword id="KW-1185">Reference proteome</keyword>
<keyword id="KW-0964">Secreted</keyword>
<keyword id="KW-0732">Signal</keyword>
<dbReference type="EMBL" id="AY306196">
    <property type="protein sequence ID" value="AAQ75380.1"/>
    <property type="molecule type" value="mRNA"/>
</dbReference>
<dbReference type="EMBL" id="AY307076">
    <property type="protein sequence ID" value="AAQ76286.1"/>
    <property type="status" value="ALT_SEQ"/>
    <property type="molecule type" value="mRNA"/>
</dbReference>
<dbReference type="EMBL" id="AF486190">
    <property type="protein sequence ID" value="AAL92028.1"/>
    <property type="molecule type" value="mRNA"/>
</dbReference>
<dbReference type="EMBL" id="CR628327">
    <property type="status" value="NOT_ANNOTATED_CDS"/>
    <property type="molecule type" value="Genomic_DNA"/>
</dbReference>
<dbReference type="EMBL" id="BC076066">
    <property type="protein sequence ID" value="AAH76066.1"/>
    <property type="molecule type" value="mRNA"/>
</dbReference>
<dbReference type="EMBL" id="BC164665">
    <property type="protein sequence ID" value="AAI64665.1"/>
    <property type="molecule type" value="mRNA"/>
</dbReference>
<dbReference type="RefSeq" id="NP_991140.1">
    <property type="nucleotide sequence ID" value="NM_205577.3"/>
</dbReference>
<dbReference type="SMR" id="Q8QGA2"/>
<dbReference type="FunCoup" id="Q8QGA2">
    <property type="interactions" value="142"/>
</dbReference>
<dbReference type="STRING" id="7955.ENSDARP00000029759"/>
<dbReference type="PaxDb" id="7955-ENSDARP00000029759"/>
<dbReference type="Ensembl" id="ENSDART00000033691">
    <property type="protein sequence ID" value="ENSDARP00000029759"/>
    <property type="gene ID" value="ENSDARG00000022951"/>
</dbReference>
<dbReference type="Ensembl" id="ENSDART00000184724">
    <property type="protein sequence ID" value="ENSDARP00000151244"/>
    <property type="gene ID" value="ENSDARG00000022951"/>
</dbReference>
<dbReference type="GeneID" id="402812"/>
<dbReference type="KEGG" id="dre:402812"/>
<dbReference type="AGR" id="ZFIN:ZDB-GENE-041102-1"/>
<dbReference type="CTD" id="113091"/>
<dbReference type="ZFIN" id="ZDB-GENE-041102-1">
    <property type="gene designation" value="pth2"/>
</dbReference>
<dbReference type="eggNOG" id="ENOG502S3PJ">
    <property type="taxonomic scope" value="Eukaryota"/>
</dbReference>
<dbReference type="HOGENOM" id="CLU_1677252_0_0_1"/>
<dbReference type="InParanoid" id="Q8QGA2"/>
<dbReference type="OMA" id="EHKRVDW"/>
<dbReference type="OrthoDB" id="9940245at2759"/>
<dbReference type="TreeFam" id="TF353520"/>
<dbReference type="Reactome" id="R-DRE-373080">
    <property type="pathway name" value="Class B/2 (Secretin family receptors)"/>
</dbReference>
<dbReference type="PRO" id="PR:Q8QGA2"/>
<dbReference type="Proteomes" id="UP000000437">
    <property type="component" value="Chromosome 17"/>
</dbReference>
<dbReference type="Bgee" id="ENSDARG00000022951">
    <property type="expression patterns" value="Expressed in midbrain and 25 other cell types or tissues"/>
</dbReference>
<dbReference type="GO" id="GO:0005576">
    <property type="term" value="C:extracellular region"/>
    <property type="evidence" value="ECO:0007669"/>
    <property type="project" value="UniProtKB-SubCell"/>
</dbReference>
<dbReference type="GO" id="GO:0048018">
    <property type="term" value="F:receptor ligand activity"/>
    <property type="evidence" value="ECO:0000314"/>
    <property type="project" value="ZFIN"/>
</dbReference>
<dbReference type="GO" id="GO:0007189">
    <property type="term" value="P:adenylate cyclase-activating G protein-coupled receptor signaling pathway"/>
    <property type="evidence" value="ECO:0000314"/>
    <property type="project" value="ZFIN"/>
</dbReference>
<dbReference type="GO" id="GO:0007218">
    <property type="term" value="P:neuropeptide signaling pathway"/>
    <property type="evidence" value="ECO:0007669"/>
    <property type="project" value="UniProtKB-KW"/>
</dbReference>
<dbReference type="GO" id="GO:0001964">
    <property type="term" value="P:startle response"/>
    <property type="evidence" value="ECO:0000315"/>
    <property type="project" value="ZFIN"/>
</dbReference>
<dbReference type="GO" id="GO:0036269">
    <property type="term" value="P:swimming behavior"/>
    <property type="evidence" value="ECO:0000315"/>
    <property type="project" value="ZFIN"/>
</dbReference>
<dbReference type="InterPro" id="IPR029396">
    <property type="entry name" value="TIP39"/>
</dbReference>
<dbReference type="PANTHER" id="PTHR28585">
    <property type="entry name" value="TUBEROINFUNDIBULAR PEPTIDE OF 39 RESIDUES"/>
    <property type="match status" value="1"/>
</dbReference>
<dbReference type="PANTHER" id="PTHR28585:SF1">
    <property type="entry name" value="TUBEROINFUNDIBULAR PEPTIDE OF 39 RESIDUES"/>
    <property type="match status" value="1"/>
</dbReference>
<dbReference type="Pfam" id="PF14980">
    <property type="entry name" value="TIP39"/>
    <property type="match status" value="1"/>
</dbReference>
<evidence type="ECO:0000255" key="1"/>
<evidence type="ECO:0000269" key="2">
    <source>
    </source>
</evidence>
<evidence type="ECO:0000269" key="3">
    <source>
    </source>
</evidence>
<evidence type="ECO:0000303" key="4">
    <source>
    </source>
</evidence>
<evidence type="ECO:0000305" key="5"/>
<evidence type="ECO:0000305" key="6">
    <source>
    </source>
</evidence>
<evidence type="ECO:0000312" key="7">
    <source>
        <dbReference type="EMBL" id="AAH76066.1"/>
    </source>
</evidence>
<evidence type="ECO:0000312" key="8">
    <source>
        <dbReference type="EMBL" id="AAL92028.1"/>
    </source>
</evidence>
<evidence type="ECO:0000312" key="9">
    <source>
        <dbReference type="EMBL" id="AAQ75380.1"/>
    </source>
</evidence>
<evidence type="ECO:0000312" key="10">
    <source>
        <dbReference type="Proteomes" id="UP000000437"/>
    </source>
</evidence>
<evidence type="ECO:0000312" key="11">
    <source>
        <dbReference type="ZFIN" id="ZDB-GENE-041102-1"/>
    </source>
</evidence>
<organism evidence="10">
    <name type="scientific">Danio rerio</name>
    <name type="common">Zebrafish</name>
    <name type="synonym">Brachydanio rerio</name>
    <dbReference type="NCBI Taxonomy" id="7955"/>
    <lineage>
        <taxon>Eukaryota</taxon>
        <taxon>Metazoa</taxon>
        <taxon>Chordata</taxon>
        <taxon>Craniata</taxon>
        <taxon>Vertebrata</taxon>
        <taxon>Euteleostomi</taxon>
        <taxon>Actinopterygii</taxon>
        <taxon>Neopterygii</taxon>
        <taxon>Teleostei</taxon>
        <taxon>Ostariophysi</taxon>
        <taxon>Cypriniformes</taxon>
        <taxon>Danionidae</taxon>
        <taxon>Danioninae</taxon>
        <taxon>Danio</taxon>
    </lineage>
</organism>
<feature type="signal peptide" evidence="1">
    <location>
        <begin position="1"/>
        <end position="25"/>
    </location>
</feature>
<feature type="propeptide" id="PRO_0000443088" evidence="5">
    <location>
        <begin position="26"/>
        <end position="116"/>
    </location>
</feature>
<feature type="peptide" id="PRO_0000443089" description="Tuberoinfundibular peptide of 39 residues" evidence="6">
    <location>
        <begin position="119"/>
        <end position="157"/>
    </location>
</feature>
<comment type="function">
    <text evidence="2">Plays a role as a potent and selective agonist of pth2r resulting in adenyl cyclase activation and intracellular calcium level elevation.</text>
</comment>
<comment type="subcellular location">
    <subcellularLocation>
        <location evidence="6">Secreted</location>
    </subcellularLocation>
</comment>
<comment type="developmental stage">
    <text evidence="2 3">Detected at the cleavage and blastula stages, 1.75-4 hours post-fertilization (hpf) (PubMed:21880859). Expressed in forebrain, midbrain, hindbrain and cells lining the brain ventricles at 19-22 hpf (PubMed:21880859). Expressed in midbrain and otic vesicles at 26-36 hpf (PubMed:21880859). Detected in bilateral domains in brain near the hypothalamus, and in heart, at 48-72 hpf (PubMed:15297442, PubMed:21880859).</text>
</comment>
<comment type="induction">
    <text evidence="3">Up-regulated in the developing brain by shh signaling.</text>
</comment>
<comment type="similarity">
    <text evidence="5">Belongs to the parathyroid hormone family.</text>
</comment>
<comment type="sequence caution" evidence="5">
    <conflict type="miscellaneous discrepancy">
        <sequence resource="EMBL-CDS" id="AAQ76286"/>
    </conflict>
    <text>Unlikely isoform. Aberrant splice sites.</text>
</comment>
<accession>Q8QGA2</accession>
<accession>Q67FW3</accession>
<gene>
    <name evidence="11" type="primary">pth2</name>
    <name evidence="4 11" type="synonym">tip39</name>
</gene>
<name>TIP39_DANRE</name>
<sequence>MALSLPPRPALLFLVLMSVTLMASAFPQPQLRPLQSNLPAIGQEDSKGEQWEVVYPSISLRDWSIQMLTAPDFGAAKTGREQLVADDWLPLSQSQMEEELVKGWTGDWPSRVGHQQKRNIVVADDAAFREKSKLLTAMERQKWLNSYMQKLLVVNSK</sequence>
<proteinExistence type="evidence at transcript level"/>
<reference evidence="9" key="1">
    <citation type="journal article" date="2004" name="Endocrinology">
        <title>Identification and characterization of the zebrafish and fugu genes encoding tuberoinfundibular peptide 39.</title>
        <authorList>
            <person name="Papasani M.R."/>
            <person name="Gensure R.C."/>
            <person name="Yan Y.L."/>
            <person name="Gunes Y."/>
            <person name="Postlethwait J.H."/>
            <person name="Ponugoti B."/>
            <person name="John M.R."/>
            <person name="Jueppner H."/>
            <person name="Rubin D.A."/>
        </authorList>
    </citation>
    <scope>NUCLEOTIDE SEQUENCE [MRNA]</scope>
    <scope>FUNCTION</scope>
    <scope>DEVELOPMENTAL STAGE</scope>
    <scope>SYNTHESIS OF 119-157</scope>
</reference>
<reference evidence="8" key="2">
    <citation type="submission" date="2002-02" db="EMBL/GenBank/DDBJ databases">
        <title>Cloning and expression of the tuberoinfundibular peptide of 39 residues (TIP39) precursor cDNA of the zebrafish.</title>
        <authorList>
            <person name="Hansen I.A."/>
            <person name="Wortmann S.F."/>
            <person name="Blind E."/>
        </authorList>
    </citation>
    <scope>NUCLEOTIDE SEQUENCE [MRNA]</scope>
    <source>
        <tissue evidence="8">Brain</tissue>
    </source>
</reference>
<reference evidence="10" key="3">
    <citation type="journal article" date="2013" name="Nature">
        <title>The zebrafish reference genome sequence and its relationship to the human genome.</title>
        <authorList>
            <person name="Howe K."/>
            <person name="Clark M.D."/>
            <person name="Torroja C.F."/>
            <person name="Torrance J."/>
            <person name="Berthelot C."/>
            <person name="Muffato M."/>
            <person name="Collins J.E."/>
            <person name="Humphray S."/>
            <person name="McLaren K."/>
            <person name="Matthews L."/>
            <person name="McLaren S."/>
            <person name="Sealy I."/>
            <person name="Caccamo M."/>
            <person name="Churcher C."/>
            <person name="Scott C."/>
            <person name="Barrett J.C."/>
            <person name="Koch R."/>
            <person name="Rauch G.J."/>
            <person name="White S."/>
            <person name="Chow W."/>
            <person name="Kilian B."/>
            <person name="Quintais L.T."/>
            <person name="Guerra-Assuncao J.A."/>
            <person name="Zhou Y."/>
            <person name="Gu Y."/>
            <person name="Yen J."/>
            <person name="Vogel J.H."/>
            <person name="Eyre T."/>
            <person name="Redmond S."/>
            <person name="Banerjee R."/>
            <person name="Chi J."/>
            <person name="Fu B."/>
            <person name="Langley E."/>
            <person name="Maguire S.F."/>
            <person name="Laird G.K."/>
            <person name="Lloyd D."/>
            <person name="Kenyon E."/>
            <person name="Donaldson S."/>
            <person name="Sehra H."/>
            <person name="Almeida-King J."/>
            <person name="Loveland J."/>
            <person name="Trevanion S."/>
            <person name="Jones M."/>
            <person name="Quail M."/>
            <person name="Willey D."/>
            <person name="Hunt A."/>
            <person name="Burton J."/>
            <person name="Sims S."/>
            <person name="McLay K."/>
            <person name="Plumb B."/>
            <person name="Davis J."/>
            <person name="Clee C."/>
            <person name="Oliver K."/>
            <person name="Clark R."/>
            <person name="Riddle C."/>
            <person name="Elliot D."/>
            <person name="Threadgold G."/>
            <person name="Harden G."/>
            <person name="Ware D."/>
            <person name="Begum S."/>
            <person name="Mortimore B."/>
            <person name="Kerry G."/>
            <person name="Heath P."/>
            <person name="Phillimore B."/>
            <person name="Tracey A."/>
            <person name="Corby N."/>
            <person name="Dunn M."/>
            <person name="Johnson C."/>
            <person name="Wood J."/>
            <person name="Clark S."/>
            <person name="Pelan S."/>
            <person name="Griffiths G."/>
            <person name="Smith M."/>
            <person name="Glithero R."/>
            <person name="Howden P."/>
            <person name="Barker N."/>
            <person name="Lloyd C."/>
            <person name="Stevens C."/>
            <person name="Harley J."/>
            <person name="Holt K."/>
            <person name="Panagiotidis G."/>
            <person name="Lovell J."/>
            <person name="Beasley H."/>
            <person name="Henderson C."/>
            <person name="Gordon D."/>
            <person name="Auger K."/>
            <person name="Wright D."/>
            <person name="Collins J."/>
            <person name="Raisen C."/>
            <person name="Dyer L."/>
            <person name="Leung K."/>
            <person name="Robertson L."/>
            <person name="Ambridge K."/>
            <person name="Leongamornlert D."/>
            <person name="McGuire S."/>
            <person name="Gilderthorp R."/>
            <person name="Griffiths C."/>
            <person name="Manthravadi D."/>
            <person name="Nichol S."/>
            <person name="Barker G."/>
            <person name="Whitehead S."/>
            <person name="Kay M."/>
            <person name="Brown J."/>
            <person name="Murnane C."/>
            <person name="Gray E."/>
            <person name="Humphries M."/>
            <person name="Sycamore N."/>
            <person name="Barker D."/>
            <person name="Saunders D."/>
            <person name="Wallis J."/>
            <person name="Babbage A."/>
            <person name="Hammond S."/>
            <person name="Mashreghi-Mohammadi M."/>
            <person name="Barr L."/>
            <person name="Martin S."/>
            <person name="Wray P."/>
            <person name="Ellington A."/>
            <person name="Matthews N."/>
            <person name="Ellwood M."/>
            <person name="Woodmansey R."/>
            <person name="Clark G."/>
            <person name="Cooper J."/>
            <person name="Tromans A."/>
            <person name="Grafham D."/>
            <person name="Skuce C."/>
            <person name="Pandian R."/>
            <person name="Andrews R."/>
            <person name="Harrison E."/>
            <person name="Kimberley A."/>
            <person name="Garnett J."/>
            <person name="Fosker N."/>
            <person name="Hall R."/>
            <person name="Garner P."/>
            <person name="Kelly D."/>
            <person name="Bird C."/>
            <person name="Palmer S."/>
            <person name="Gehring I."/>
            <person name="Berger A."/>
            <person name="Dooley C.M."/>
            <person name="Ersan-Urun Z."/>
            <person name="Eser C."/>
            <person name="Geiger H."/>
            <person name="Geisler M."/>
            <person name="Karotki L."/>
            <person name="Kirn A."/>
            <person name="Konantz J."/>
            <person name="Konantz M."/>
            <person name="Oberlander M."/>
            <person name="Rudolph-Geiger S."/>
            <person name="Teucke M."/>
            <person name="Lanz C."/>
            <person name="Raddatz G."/>
            <person name="Osoegawa K."/>
            <person name="Zhu B."/>
            <person name="Rapp A."/>
            <person name="Widaa S."/>
            <person name="Langford C."/>
            <person name="Yang F."/>
            <person name="Schuster S.C."/>
            <person name="Carter N.P."/>
            <person name="Harrow J."/>
            <person name="Ning Z."/>
            <person name="Herrero J."/>
            <person name="Searle S.M."/>
            <person name="Enright A."/>
            <person name="Geisler R."/>
            <person name="Plasterk R.H."/>
            <person name="Lee C."/>
            <person name="Westerfield M."/>
            <person name="de Jong P.J."/>
            <person name="Zon L.I."/>
            <person name="Postlethwait J.H."/>
            <person name="Nusslein-Volhard C."/>
            <person name="Hubbard T.J."/>
            <person name="Roest Crollius H."/>
            <person name="Rogers J."/>
            <person name="Stemple D.L."/>
        </authorList>
    </citation>
    <scope>NUCLEOTIDE SEQUENCE [LARGE SCALE GENOMIC DNA]</scope>
    <source>
        <strain>Tuebingen</strain>
    </source>
</reference>
<reference evidence="7" key="4">
    <citation type="submission" date="2008-04" db="EMBL/GenBank/DDBJ databases">
        <authorList>
            <consortium name="NIH - Zebrafish Gene Collection (ZGC) project"/>
        </authorList>
    </citation>
    <scope>NUCLEOTIDE SEQUENCE [LARGE SCALE MRNA]</scope>
    <source>
        <tissue>Brain</tissue>
    </source>
</reference>
<reference evidence="5" key="5">
    <citation type="journal article" date="2011" name="J. Endocrinol.">
        <title>Evolution of the vertebrate pth2 (tip39) gene family and the regulation of PTH type 2 receptor (pth2r) and its endogenous ligand pth2 by hedgehog signaling in zebrafish development.</title>
        <authorList>
            <person name="Bhattacharya P."/>
            <person name="Yan Y.L."/>
            <person name="Postlethwait J."/>
            <person name="Rubin D.A."/>
        </authorList>
    </citation>
    <scope>DEVELOPMENTAL STAGE</scope>
    <scope>INDUCTION</scope>
</reference>
<protein>
    <recommendedName>
        <fullName evidence="4">Tuberoinfundibular peptide of 39 residues</fullName>
        <shortName evidence="4">TIP39</shortName>
    </recommendedName>
    <alternativeName>
        <fullName evidence="11">Parathyroid hormone 2</fullName>
    </alternativeName>
</protein>